<feature type="chain" id="PRO_0000298956" description="Iron-sulfur cluster assembly SufBD family protein SA0778">
    <location>
        <begin position="1"/>
        <end position="465"/>
    </location>
</feature>
<dbReference type="EMBL" id="BA000018">
    <property type="protein sequence ID" value="BAB42017.1"/>
    <property type="molecule type" value="Genomic_DNA"/>
</dbReference>
<dbReference type="PIR" id="F89857">
    <property type="entry name" value="F89857"/>
</dbReference>
<dbReference type="SMR" id="Q7A6L4"/>
<dbReference type="EnsemblBacteria" id="BAB42017">
    <property type="protein sequence ID" value="BAB42017"/>
    <property type="gene ID" value="BAB42017"/>
</dbReference>
<dbReference type="KEGG" id="sau:SA0778"/>
<dbReference type="HOGENOM" id="CLU_026231_0_1_9"/>
<dbReference type="GO" id="GO:0016226">
    <property type="term" value="P:iron-sulfur cluster assembly"/>
    <property type="evidence" value="ECO:0007669"/>
    <property type="project" value="InterPro"/>
</dbReference>
<dbReference type="InterPro" id="IPR055346">
    <property type="entry name" value="Fe-S_cluster_assembly_SufBD"/>
</dbReference>
<dbReference type="InterPro" id="IPR010231">
    <property type="entry name" value="SUF_FeS_clus_asmbl_SufB"/>
</dbReference>
<dbReference type="InterPro" id="IPR000825">
    <property type="entry name" value="SUF_FeS_clus_asmbl_SufBD_core"/>
</dbReference>
<dbReference type="InterPro" id="IPR037284">
    <property type="entry name" value="SUF_FeS_clus_asmbl_SufBD_sf"/>
</dbReference>
<dbReference type="InterPro" id="IPR045595">
    <property type="entry name" value="SufBD_N"/>
</dbReference>
<dbReference type="NCBIfam" id="TIGR01980">
    <property type="entry name" value="sufB"/>
    <property type="match status" value="1"/>
</dbReference>
<dbReference type="PANTHER" id="PTHR30508">
    <property type="entry name" value="FES CLUSTER ASSEMBLY PROTEIN SUF"/>
    <property type="match status" value="1"/>
</dbReference>
<dbReference type="PANTHER" id="PTHR30508:SF1">
    <property type="entry name" value="UPF0051 PROTEIN ABCI8, CHLOROPLASTIC-RELATED"/>
    <property type="match status" value="1"/>
</dbReference>
<dbReference type="Pfam" id="PF01458">
    <property type="entry name" value="SUFBD_core"/>
    <property type="match status" value="1"/>
</dbReference>
<dbReference type="Pfam" id="PF19295">
    <property type="entry name" value="SufBD_N"/>
    <property type="match status" value="1"/>
</dbReference>
<dbReference type="SUPFAM" id="SSF101960">
    <property type="entry name" value="Stabilizer of iron transporter SufD"/>
    <property type="match status" value="1"/>
</dbReference>
<reference key="1">
    <citation type="journal article" date="2001" name="Lancet">
        <title>Whole genome sequencing of meticillin-resistant Staphylococcus aureus.</title>
        <authorList>
            <person name="Kuroda M."/>
            <person name="Ohta T."/>
            <person name="Uchiyama I."/>
            <person name="Baba T."/>
            <person name="Yuzawa H."/>
            <person name="Kobayashi I."/>
            <person name="Cui L."/>
            <person name="Oguchi A."/>
            <person name="Aoki K."/>
            <person name="Nagai Y."/>
            <person name="Lian J.-Q."/>
            <person name="Ito T."/>
            <person name="Kanamori M."/>
            <person name="Matsumaru H."/>
            <person name="Maruyama A."/>
            <person name="Murakami H."/>
            <person name="Hosoyama A."/>
            <person name="Mizutani-Ui Y."/>
            <person name="Takahashi N.K."/>
            <person name="Sawano T."/>
            <person name="Inoue R."/>
            <person name="Kaito C."/>
            <person name="Sekimizu K."/>
            <person name="Hirakawa H."/>
            <person name="Kuhara S."/>
            <person name="Goto S."/>
            <person name="Yabuzaki J."/>
            <person name="Kanehisa M."/>
            <person name="Yamashita A."/>
            <person name="Oshima K."/>
            <person name="Furuya K."/>
            <person name="Yoshino C."/>
            <person name="Shiba T."/>
            <person name="Hattori M."/>
            <person name="Ogasawara N."/>
            <person name="Hayashi H."/>
            <person name="Hiramatsu K."/>
        </authorList>
    </citation>
    <scope>NUCLEOTIDE SEQUENCE [LARGE SCALE GENOMIC DNA]</scope>
    <source>
        <strain>N315</strain>
    </source>
</reference>
<reference key="2">
    <citation type="submission" date="2007-10" db="UniProtKB">
        <title>Shotgun proteomic analysis of total and membrane protein extracts of S. aureus strain N315.</title>
        <authorList>
            <person name="Vaezzadeh A.R."/>
            <person name="Deshusses J."/>
            <person name="Lescuyer P."/>
            <person name="Hochstrasser D.F."/>
        </authorList>
    </citation>
    <scope>IDENTIFICATION BY MASS SPECTROMETRY [LARGE SCALE ANALYSIS]</scope>
    <source>
        <strain>N315</strain>
    </source>
</reference>
<comment type="similarity">
    <text evidence="1">Belongs to the iron-sulfur cluster assembly SufBD family.</text>
</comment>
<accession>Q7A6L4</accession>
<name>Y778_STAAN</name>
<gene>
    <name type="ordered locus">SA0778</name>
</gene>
<organism>
    <name type="scientific">Staphylococcus aureus (strain N315)</name>
    <dbReference type="NCBI Taxonomy" id="158879"/>
    <lineage>
        <taxon>Bacteria</taxon>
        <taxon>Bacillati</taxon>
        <taxon>Bacillota</taxon>
        <taxon>Bacilli</taxon>
        <taxon>Bacillales</taxon>
        <taxon>Staphylococcaceae</taxon>
        <taxon>Staphylococcus</taxon>
    </lineage>
</organism>
<evidence type="ECO:0000305" key="1"/>
<sequence length="465" mass="52531">MAKKAPDVGDYKYGFHDDDVSIFRSERGLTENIVREISNMKNEPEWMLDFRLKSLKLFYKMPMPQWGGDLSELNFDDITYYVKPSEQAERSWDEVPEEIKRTFDKLGIPEAEQKYLAGVSAQYESEVVYHNMEKELEEKGIIFKDTDSALQENEELFKKYFASVVPAADNKFAALNSAVWSGGSFIYVPKNIKLDTPLQAYFRINSENMGQFERTLIIADEGASVHYVEGCTAPVYTTSSLHSAVVEIIVHKDAHVRYTTIQNWANNVYNLVTKRTFVYENGNMEWVDGNLGSKLTMKYPNCVLLGEGAKGSTLSIAFAGKGQVQDAGAKMIHKAPNTSSTIVSKSISKNGGKVIYRGIVHFGRKAKGARSNIECDTLILDNESTSDTIPYNEVFNDQISLEHEAKVSKVSEEQLFYLMSRGISEEEATEMIVMGFIEPFTKELPMEYAVEMNRLIKFEMEGSIG</sequence>
<protein>
    <recommendedName>
        <fullName>Iron-sulfur cluster assembly SufBD family protein SA0778</fullName>
    </recommendedName>
</protein>
<proteinExistence type="evidence at protein level"/>